<feature type="chain" id="PRO_1000006662" description="Aspartate--tRNA ligase">
    <location>
        <begin position="1"/>
        <end position="593"/>
    </location>
</feature>
<feature type="region of interest" description="Aspartate" evidence="1">
    <location>
        <begin position="204"/>
        <end position="207"/>
    </location>
</feature>
<feature type="binding site" evidence="1">
    <location>
        <position position="180"/>
    </location>
    <ligand>
        <name>L-aspartate</name>
        <dbReference type="ChEBI" id="CHEBI:29991"/>
    </ligand>
</feature>
<feature type="binding site" evidence="1">
    <location>
        <begin position="226"/>
        <end position="228"/>
    </location>
    <ligand>
        <name>ATP</name>
        <dbReference type="ChEBI" id="CHEBI:30616"/>
    </ligand>
</feature>
<feature type="binding site" evidence="1">
    <location>
        <position position="226"/>
    </location>
    <ligand>
        <name>L-aspartate</name>
        <dbReference type="ChEBI" id="CHEBI:29991"/>
    </ligand>
</feature>
<feature type="binding site" evidence="1">
    <location>
        <position position="235"/>
    </location>
    <ligand>
        <name>ATP</name>
        <dbReference type="ChEBI" id="CHEBI:30616"/>
    </ligand>
</feature>
<feature type="binding site" evidence="1">
    <location>
        <position position="453"/>
    </location>
    <ligand>
        <name>L-aspartate</name>
        <dbReference type="ChEBI" id="CHEBI:29991"/>
    </ligand>
</feature>
<feature type="binding site" evidence="1">
    <location>
        <position position="487"/>
    </location>
    <ligand>
        <name>ATP</name>
        <dbReference type="ChEBI" id="CHEBI:30616"/>
    </ligand>
</feature>
<feature type="binding site" evidence="1">
    <location>
        <position position="494"/>
    </location>
    <ligand>
        <name>L-aspartate</name>
        <dbReference type="ChEBI" id="CHEBI:29991"/>
    </ligand>
</feature>
<feature type="binding site" evidence="1">
    <location>
        <begin position="539"/>
        <end position="542"/>
    </location>
    <ligand>
        <name>ATP</name>
        <dbReference type="ChEBI" id="CHEBI:30616"/>
    </ligand>
</feature>
<protein>
    <recommendedName>
        <fullName evidence="1">Aspartate--tRNA ligase</fullName>
        <ecNumber evidence="1">6.1.1.12</ecNumber>
    </recommendedName>
    <alternativeName>
        <fullName evidence="1">Aspartyl-tRNA synthetase</fullName>
        <shortName evidence="1">AspRS</shortName>
    </alternativeName>
</protein>
<accession>A5I6D5</accession>
<accession>A7G7L8</accession>
<reference key="1">
    <citation type="journal article" date="2007" name="Genome Res.">
        <title>Genome sequence of a proteolytic (Group I) Clostridium botulinum strain Hall A and comparative analysis of the clostridial genomes.</title>
        <authorList>
            <person name="Sebaihia M."/>
            <person name="Peck M.W."/>
            <person name="Minton N.P."/>
            <person name="Thomson N.R."/>
            <person name="Holden M.T.G."/>
            <person name="Mitchell W.J."/>
            <person name="Carter A.T."/>
            <person name="Bentley S.D."/>
            <person name="Mason D.R."/>
            <person name="Crossman L."/>
            <person name="Paul C.J."/>
            <person name="Ivens A."/>
            <person name="Wells-Bennik M.H.J."/>
            <person name="Davis I.J."/>
            <person name="Cerdeno-Tarraga A.M."/>
            <person name="Churcher C."/>
            <person name="Quail M.A."/>
            <person name="Chillingworth T."/>
            <person name="Feltwell T."/>
            <person name="Fraser A."/>
            <person name="Goodhead I."/>
            <person name="Hance Z."/>
            <person name="Jagels K."/>
            <person name="Larke N."/>
            <person name="Maddison M."/>
            <person name="Moule S."/>
            <person name="Mungall K."/>
            <person name="Norbertczak H."/>
            <person name="Rabbinowitsch E."/>
            <person name="Sanders M."/>
            <person name="Simmonds M."/>
            <person name="White B."/>
            <person name="Whithead S."/>
            <person name="Parkhill J."/>
        </authorList>
    </citation>
    <scope>NUCLEOTIDE SEQUENCE [LARGE SCALE GENOMIC DNA]</scope>
    <source>
        <strain>Hall / ATCC 3502 / NCTC 13319 / Type A</strain>
    </source>
</reference>
<reference key="2">
    <citation type="journal article" date="2007" name="PLoS ONE">
        <title>Analysis of the neurotoxin complex genes in Clostridium botulinum A1-A4 and B1 strains: BoNT/A3, /Ba4 and /B1 clusters are located within plasmids.</title>
        <authorList>
            <person name="Smith T.J."/>
            <person name="Hill K.K."/>
            <person name="Foley B.T."/>
            <person name="Detter J.C."/>
            <person name="Munk A.C."/>
            <person name="Bruce D.C."/>
            <person name="Doggett N.A."/>
            <person name="Smith L.A."/>
            <person name="Marks J.D."/>
            <person name="Xie G."/>
            <person name="Brettin T.S."/>
        </authorList>
    </citation>
    <scope>NUCLEOTIDE SEQUENCE [LARGE SCALE GENOMIC DNA]</scope>
    <source>
        <strain>Hall / ATCC 3502 / NCTC 13319 / Type A</strain>
    </source>
</reference>
<comment type="function">
    <text evidence="1">Catalyzes the attachment of L-aspartate to tRNA(Asp) in a two-step reaction: L-aspartate is first activated by ATP to form Asp-AMP and then transferred to the acceptor end of tRNA(Asp).</text>
</comment>
<comment type="catalytic activity">
    <reaction evidence="1">
        <text>tRNA(Asp) + L-aspartate + ATP = L-aspartyl-tRNA(Asp) + AMP + diphosphate</text>
        <dbReference type="Rhea" id="RHEA:19649"/>
        <dbReference type="Rhea" id="RHEA-COMP:9660"/>
        <dbReference type="Rhea" id="RHEA-COMP:9678"/>
        <dbReference type="ChEBI" id="CHEBI:29991"/>
        <dbReference type="ChEBI" id="CHEBI:30616"/>
        <dbReference type="ChEBI" id="CHEBI:33019"/>
        <dbReference type="ChEBI" id="CHEBI:78442"/>
        <dbReference type="ChEBI" id="CHEBI:78516"/>
        <dbReference type="ChEBI" id="CHEBI:456215"/>
        <dbReference type="EC" id="6.1.1.12"/>
    </reaction>
</comment>
<comment type="subunit">
    <text evidence="1">Homodimer.</text>
</comment>
<comment type="subcellular location">
    <subcellularLocation>
        <location evidence="1">Cytoplasm</location>
    </subcellularLocation>
</comment>
<comment type="similarity">
    <text evidence="1">Belongs to the class-II aminoacyl-tRNA synthetase family. Type 1 subfamily.</text>
</comment>
<organism>
    <name type="scientific">Clostridium botulinum (strain Hall / ATCC 3502 / NCTC 13319 / Type A)</name>
    <dbReference type="NCBI Taxonomy" id="441771"/>
    <lineage>
        <taxon>Bacteria</taxon>
        <taxon>Bacillati</taxon>
        <taxon>Bacillota</taxon>
        <taxon>Clostridia</taxon>
        <taxon>Eubacteriales</taxon>
        <taxon>Clostridiaceae</taxon>
        <taxon>Clostridium</taxon>
    </lineage>
</organism>
<name>SYD_CLOBH</name>
<evidence type="ECO:0000255" key="1">
    <source>
        <dbReference type="HAMAP-Rule" id="MF_00044"/>
    </source>
</evidence>
<sequence>MGEALRGLKRTIMCGESRENNIGQKVTVMGWVQRKRNLGGLIFVDLRDRTGIMQIVFGEEINKEAFEKSDNVKSEYCIAVTGEIVKRQSPNNDMETGAVELKGEDIKILSESETPPIYIKEGLDASENIRLKYRYLDLRRPDMQKIFMIRHKTCKVVRDFLDENGFLEMETPILTKSTPEGARDYLVPSRNYKGMFYALPQSPQIFKQLLMVSGYDKYFQITKCFRDEDLRANRQPEFTQIDMELSFVEEDDVIELNERLLAKVFKEVGGIDVKLPIERMPYKIAMEKYGSDKPDLRFGMEINDLTEAVKNSEFKVFKGAIEAGGSVRAIKAENCATMGRKQIDKLQDFVKTYKAKGLAWIAYKEDEIKSPIAKFLTEEEMKAILEKMDAKAGDLILIVADKNNVVFESLGALRLHIAKELDIINKNEFRFVWITEFPLLAYNEEEGRYQAEHHPFTAIMDEDIELLGTEPGKVRAKAYDIVLNGEELGGGSIRIHDSKFQEKMFSVLGFTKEKAWERFGFLLEAFKFGPPPHGGLAYGLDRMIMFLAGTENIKDVITFPKNQNAFCPLTEAPNVVDENQLEELGIKKIEKED</sequence>
<gene>
    <name evidence="1" type="primary">aspS</name>
    <name type="ordered locus">CBO3054</name>
    <name type="ordered locus">CLC_2956</name>
</gene>
<keyword id="KW-0030">Aminoacyl-tRNA synthetase</keyword>
<keyword id="KW-0067">ATP-binding</keyword>
<keyword id="KW-0963">Cytoplasm</keyword>
<keyword id="KW-0436">Ligase</keyword>
<keyword id="KW-0547">Nucleotide-binding</keyword>
<keyword id="KW-0648">Protein biosynthesis</keyword>
<keyword id="KW-1185">Reference proteome</keyword>
<proteinExistence type="inferred from homology"/>
<dbReference type="EC" id="6.1.1.12" evidence="1"/>
<dbReference type="EMBL" id="CP000727">
    <property type="protein sequence ID" value="ABS38278.1"/>
    <property type="molecule type" value="Genomic_DNA"/>
</dbReference>
<dbReference type="EMBL" id="AM412317">
    <property type="protein sequence ID" value="CAL84617.1"/>
    <property type="molecule type" value="Genomic_DNA"/>
</dbReference>
<dbReference type="RefSeq" id="WP_012048075.1">
    <property type="nucleotide sequence ID" value="NC_009698.1"/>
</dbReference>
<dbReference type="RefSeq" id="YP_001255546.1">
    <property type="nucleotide sequence ID" value="NC_009495.1"/>
</dbReference>
<dbReference type="RefSeq" id="YP_001388783.1">
    <property type="nucleotide sequence ID" value="NC_009698.1"/>
</dbReference>
<dbReference type="SMR" id="A5I6D5"/>
<dbReference type="GeneID" id="5185641"/>
<dbReference type="KEGG" id="cbh:CLC_2956"/>
<dbReference type="KEGG" id="cbo:CBO3054"/>
<dbReference type="PATRIC" id="fig|413999.7.peg.3032"/>
<dbReference type="HOGENOM" id="CLU_014330_3_2_9"/>
<dbReference type="PRO" id="PR:A5I6D5"/>
<dbReference type="Proteomes" id="UP000001986">
    <property type="component" value="Chromosome"/>
</dbReference>
<dbReference type="GO" id="GO:0005737">
    <property type="term" value="C:cytoplasm"/>
    <property type="evidence" value="ECO:0007669"/>
    <property type="project" value="UniProtKB-SubCell"/>
</dbReference>
<dbReference type="GO" id="GO:0004815">
    <property type="term" value="F:aspartate-tRNA ligase activity"/>
    <property type="evidence" value="ECO:0000318"/>
    <property type="project" value="GO_Central"/>
</dbReference>
<dbReference type="GO" id="GO:0005524">
    <property type="term" value="F:ATP binding"/>
    <property type="evidence" value="ECO:0007669"/>
    <property type="project" value="UniProtKB-UniRule"/>
</dbReference>
<dbReference type="GO" id="GO:0140096">
    <property type="term" value="F:catalytic activity, acting on a protein"/>
    <property type="evidence" value="ECO:0007669"/>
    <property type="project" value="UniProtKB-ARBA"/>
</dbReference>
<dbReference type="GO" id="GO:0003676">
    <property type="term" value="F:nucleic acid binding"/>
    <property type="evidence" value="ECO:0007669"/>
    <property type="project" value="InterPro"/>
</dbReference>
<dbReference type="GO" id="GO:0016740">
    <property type="term" value="F:transferase activity"/>
    <property type="evidence" value="ECO:0007669"/>
    <property type="project" value="UniProtKB-ARBA"/>
</dbReference>
<dbReference type="GO" id="GO:0006422">
    <property type="term" value="P:aspartyl-tRNA aminoacylation"/>
    <property type="evidence" value="ECO:0000318"/>
    <property type="project" value="GO_Central"/>
</dbReference>
<dbReference type="CDD" id="cd00777">
    <property type="entry name" value="AspRS_core"/>
    <property type="match status" value="1"/>
</dbReference>
<dbReference type="CDD" id="cd04317">
    <property type="entry name" value="EcAspRS_like_N"/>
    <property type="match status" value="1"/>
</dbReference>
<dbReference type="Gene3D" id="3.30.930.10">
    <property type="entry name" value="Bira Bifunctional Protein, Domain 2"/>
    <property type="match status" value="1"/>
</dbReference>
<dbReference type="Gene3D" id="3.30.1360.30">
    <property type="entry name" value="GAD-like domain"/>
    <property type="match status" value="1"/>
</dbReference>
<dbReference type="Gene3D" id="2.40.50.140">
    <property type="entry name" value="Nucleic acid-binding proteins"/>
    <property type="match status" value="1"/>
</dbReference>
<dbReference type="HAMAP" id="MF_00044">
    <property type="entry name" value="Asp_tRNA_synth_type1"/>
    <property type="match status" value="1"/>
</dbReference>
<dbReference type="InterPro" id="IPR004364">
    <property type="entry name" value="Aa-tRNA-synt_II"/>
</dbReference>
<dbReference type="InterPro" id="IPR006195">
    <property type="entry name" value="aa-tRNA-synth_II"/>
</dbReference>
<dbReference type="InterPro" id="IPR045864">
    <property type="entry name" value="aa-tRNA-synth_II/BPL/LPL"/>
</dbReference>
<dbReference type="InterPro" id="IPR004524">
    <property type="entry name" value="Asp-tRNA-ligase_1"/>
</dbReference>
<dbReference type="InterPro" id="IPR047089">
    <property type="entry name" value="Asp-tRNA-ligase_1_N"/>
</dbReference>
<dbReference type="InterPro" id="IPR002312">
    <property type="entry name" value="Asp/Asn-tRNA-synth_IIb"/>
</dbReference>
<dbReference type="InterPro" id="IPR047090">
    <property type="entry name" value="AspRS_core"/>
</dbReference>
<dbReference type="InterPro" id="IPR004115">
    <property type="entry name" value="GAD-like_sf"/>
</dbReference>
<dbReference type="InterPro" id="IPR029351">
    <property type="entry name" value="GAD_dom"/>
</dbReference>
<dbReference type="InterPro" id="IPR012340">
    <property type="entry name" value="NA-bd_OB-fold"/>
</dbReference>
<dbReference type="InterPro" id="IPR004365">
    <property type="entry name" value="NA-bd_OB_tRNA"/>
</dbReference>
<dbReference type="NCBIfam" id="TIGR00459">
    <property type="entry name" value="aspS_bact"/>
    <property type="match status" value="1"/>
</dbReference>
<dbReference type="NCBIfam" id="NF001750">
    <property type="entry name" value="PRK00476.1"/>
    <property type="match status" value="1"/>
</dbReference>
<dbReference type="PANTHER" id="PTHR22594:SF5">
    <property type="entry name" value="ASPARTATE--TRNA LIGASE, MITOCHONDRIAL"/>
    <property type="match status" value="1"/>
</dbReference>
<dbReference type="PANTHER" id="PTHR22594">
    <property type="entry name" value="ASPARTYL/LYSYL-TRNA SYNTHETASE"/>
    <property type="match status" value="1"/>
</dbReference>
<dbReference type="Pfam" id="PF02938">
    <property type="entry name" value="GAD"/>
    <property type="match status" value="1"/>
</dbReference>
<dbReference type="Pfam" id="PF00152">
    <property type="entry name" value="tRNA-synt_2"/>
    <property type="match status" value="1"/>
</dbReference>
<dbReference type="Pfam" id="PF01336">
    <property type="entry name" value="tRNA_anti-codon"/>
    <property type="match status" value="1"/>
</dbReference>
<dbReference type="PRINTS" id="PR01042">
    <property type="entry name" value="TRNASYNTHASP"/>
</dbReference>
<dbReference type="SUPFAM" id="SSF55681">
    <property type="entry name" value="Class II aaRS and biotin synthetases"/>
    <property type="match status" value="1"/>
</dbReference>
<dbReference type="SUPFAM" id="SSF55261">
    <property type="entry name" value="GAD domain-like"/>
    <property type="match status" value="1"/>
</dbReference>
<dbReference type="SUPFAM" id="SSF50249">
    <property type="entry name" value="Nucleic acid-binding proteins"/>
    <property type="match status" value="1"/>
</dbReference>
<dbReference type="PROSITE" id="PS50862">
    <property type="entry name" value="AA_TRNA_LIGASE_II"/>
    <property type="match status" value="1"/>
</dbReference>